<keyword id="KW-0002">3D-structure</keyword>
<keyword id="KW-0903">Direct protein sequencing</keyword>
<keyword id="KW-0472">Membrane</keyword>
<keyword id="KW-0602">Photosynthesis</keyword>
<keyword id="KW-0604">Photosystem II</keyword>
<keyword id="KW-1185">Reference proteome</keyword>
<keyword id="KW-0793">Thylakoid</keyword>
<keyword id="KW-0812">Transmembrane</keyword>
<keyword id="KW-1133">Transmembrane helix</keyword>
<protein>
    <recommendedName>
        <fullName evidence="2">Photosystem II assembly protein Psb34</fullName>
    </recommendedName>
</protein>
<accession>Q8DMP8</accession>
<gene>
    <name evidence="2" type="primary">psb34</name>
    <name evidence="5" type="ordered locus">tsl0063</name>
</gene>
<name>PSB34_THEVB</name>
<sequence>MRYTTDEGGRLNNFAIEPKVYQAQPWTPQQKVRAALLVGGGLLLVAGLVAIAVGVS</sequence>
<proteinExistence type="evidence at protein level"/>
<feature type="chain" id="PRO_0000459091" description="Photosystem II assembly protein Psb34">
    <location>
        <begin position="1"/>
        <end position="56"/>
    </location>
</feature>
<feature type="topological domain" description="Cytoplasmic" evidence="1">
    <location>
        <begin position="1"/>
        <end position="33"/>
    </location>
</feature>
<feature type="transmembrane region" description="Helical" evidence="1 6">
    <location>
        <begin position="34"/>
        <end position="54"/>
    </location>
</feature>
<feature type="topological domain" description="Extracellular" evidence="1">
    <location>
        <begin position="55"/>
        <end position="56"/>
    </location>
</feature>
<feature type="turn" evidence="9">
    <location>
        <begin position="6"/>
        <end position="9"/>
    </location>
</feature>
<feature type="helix" evidence="9">
    <location>
        <begin position="28"/>
        <end position="54"/>
    </location>
</feature>
<reference evidence="5" key="1">
    <citation type="journal article" date="2002" name="DNA Res.">
        <title>Complete genome structure of the thermophilic cyanobacterium Thermosynechococcus elongatus BP-1.</title>
        <authorList>
            <person name="Nakamura Y."/>
            <person name="Kaneko T."/>
            <person name="Sato S."/>
            <person name="Ikeuchi M."/>
            <person name="Katoh H."/>
            <person name="Sasamoto S."/>
            <person name="Watanabe A."/>
            <person name="Iriguchi M."/>
            <person name="Kawashima K."/>
            <person name="Kimura T."/>
            <person name="Kishida Y."/>
            <person name="Kiyokawa C."/>
            <person name="Kohara M."/>
            <person name="Matsumoto M."/>
            <person name="Matsuno A."/>
            <person name="Nakazaki N."/>
            <person name="Shimpo S."/>
            <person name="Sugimoto M."/>
            <person name="Takeuchi C."/>
            <person name="Yamada M."/>
            <person name="Tabata S."/>
        </authorList>
    </citation>
    <scope>NUCLEOTIDE SEQUENCE [LARGE SCALE GENOMIC DNA]</scope>
    <source>
        <strain>NIES-2133 / IAM M-273 / BP-1</strain>
    </source>
</reference>
<reference evidence="7 8" key="2">
    <citation type="journal article" date="2021" name="Nat. Plants">
        <title>Structural insights into photosystem II assembly.</title>
        <authorList>
            <person name="Zabret J."/>
            <person name="Bohn S."/>
            <person name="Schuller S.K."/>
            <person name="Arnolds O."/>
            <person name="Moller M."/>
            <person name="Meier-Credo J."/>
            <person name="Liauw P."/>
            <person name="Chan A."/>
            <person name="Tajkhorshid E."/>
            <person name="Langer J.D."/>
            <person name="Stoll R."/>
            <person name="Krieger-Liszkay A."/>
            <person name="Engel B.D."/>
            <person name="Rudack T."/>
            <person name="Schuller J.M."/>
            <person name="Nowaczyk M.M."/>
        </authorList>
    </citation>
    <scope>STRUCTURE BY ELECTRON MICROSCOPY (2.68 ANGSTROMS) IN PSII-I ASSEMBLY COMPLEX</scope>
    <scope>PROTEIN SEQUENCE OF 1-32 AND 46-56</scope>
    <scope>FUNCTION</scope>
    <scope>SUBUNIT</scope>
    <scope>SUBCELLULAR LOCATION</scope>
    <scope>MASS SPECTROMETRY</scope>
    <scope>TOPOLOGY</scope>
    <source>
        <strain>NIES-2133 / IAM M-273 / BP-1</strain>
    </source>
</reference>
<organism>
    <name type="scientific">Thermosynechococcus vestitus (strain NIES-2133 / IAM M-273 / BP-1)</name>
    <dbReference type="NCBI Taxonomy" id="197221"/>
    <lineage>
        <taxon>Bacteria</taxon>
        <taxon>Bacillati</taxon>
        <taxon>Cyanobacteriota</taxon>
        <taxon>Cyanophyceae</taxon>
        <taxon>Acaryochloridales</taxon>
        <taxon>Thermosynechococcaceae</taxon>
        <taxon>Thermosynechococcus</taxon>
    </lineage>
</organism>
<dbReference type="EMBL" id="BA000039">
    <property type="protein sequence ID" value="BAC07616.1"/>
    <property type="molecule type" value="Genomic_DNA"/>
</dbReference>
<dbReference type="RefSeq" id="NP_680854.1">
    <property type="nucleotide sequence ID" value="NC_004113.1"/>
</dbReference>
<dbReference type="RefSeq" id="WP_011055918.1">
    <property type="nucleotide sequence ID" value="NC_004113.1"/>
</dbReference>
<dbReference type="PDB" id="7DXA">
    <property type="method" value="EM"/>
    <property type="resolution" value="3.14 A"/>
    <property type="chains" value="B=1-56"/>
</dbReference>
<dbReference type="PDB" id="7DXH">
    <property type="method" value="EM"/>
    <property type="resolution" value="3.14 A"/>
    <property type="chains" value="B=1-56"/>
</dbReference>
<dbReference type="PDB" id="7NHP">
    <property type="method" value="EM"/>
    <property type="resolution" value="2.72 A"/>
    <property type="chains" value="3=1-56"/>
</dbReference>
<dbReference type="PDB" id="7NHQ">
    <property type="method" value="EM"/>
    <property type="resolution" value="2.68 A"/>
    <property type="chains" value="3=1-56"/>
</dbReference>
<dbReference type="PDBsum" id="7DXA"/>
<dbReference type="PDBsum" id="7DXH"/>
<dbReference type="PDBsum" id="7NHP"/>
<dbReference type="PDBsum" id="7NHQ"/>
<dbReference type="EMDB" id="EMD-12336"/>
<dbReference type="EMDB" id="EMD-12337"/>
<dbReference type="EMDB" id="EMD-30902"/>
<dbReference type="EMDB" id="EMD-30909"/>
<dbReference type="SMR" id="Q8DMP8"/>
<dbReference type="STRING" id="197221.gene:10746641"/>
<dbReference type="EnsemblBacteria" id="BAC07616">
    <property type="protein sequence ID" value="BAC07616"/>
    <property type="gene ID" value="BAC07616"/>
</dbReference>
<dbReference type="KEGG" id="tel:tsl0063"/>
<dbReference type="Proteomes" id="UP000000440">
    <property type="component" value="Chromosome"/>
</dbReference>
<dbReference type="GO" id="GO:0009523">
    <property type="term" value="C:photosystem II"/>
    <property type="evidence" value="ECO:0007669"/>
    <property type="project" value="UniProtKB-KW"/>
</dbReference>
<dbReference type="GO" id="GO:0031676">
    <property type="term" value="C:plasma membrane-derived thylakoid membrane"/>
    <property type="evidence" value="ECO:0007669"/>
    <property type="project" value="UniProtKB-SubCell"/>
</dbReference>
<dbReference type="GO" id="GO:0015979">
    <property type="term" value="P:photosynthesis"/>
    <property type="evidence" value="ECO:0007669"/>
    <property type="project" value="UniProtKB-KW"/>
</dbReference>
<dbReference type="InterPro" id="IPR048028">
    <property type="entry name" value="Psb34-like"/>
</dbReference>
<dbReference type="NCBIfam" id="NF033486">
    <property type="entry name" value="harvest_ssl1498"/>
    <property type="match status" value="1"/>
</dbReference>
<evidence type="ECO:0000269" key="1">
    <source>
    </source>
</evidence>
<evidence type="ECO:0000303" key="2">
    <source>
    </source>
</evidence>
<evidence type="ECO:0000305" key="3"/>
<evidence type="ECO:0000305" key="4">
    <source>
    </source>
</evidence>
<evidence type="ECO:0000312" key="5">
    <source>
        <dbReference type="EMBL" id="BAC07616.1"/>
    </source>
</evidence>
<evidence type="ECO:0000312" key="6">
    <source>
        <dbReference type="PDB" id="7NHQ"/>
    </source>
</evidence>
<evidence type="ECO:0007744" key="7">
    <source>
        <dbReference type="PDB" id="7NHP"/>
    </source>
</evidence>
<evidence type="ECO:0007744" key="8">
    <source>
        <dbReference type="PDB" id="7NHQ"/>
    </source>
</evidence>
<evidence type="ECO:0007829" key="9">
    <source>
        <dbReference type="PDB" id="7NHQ"/>
    </source>
</evidence>
<comment type="function">
    <text evidence="4">Involved in photosystem II (PSII) assembly and/or repair, probably in conversion of late PSII assembly intermediates into mature dimeric PSII.</text>
</comment>
<comment type="subunit">
    <text evidence="1">Part of photosystem II (PSII) assembly intermediate complex PSII-I; crystallized from a strain without psbJ, it forms monomeric PSII before addition of the oxygen evolving complex. PSII-I includes 3 assembly factors not found in mature PSII (Psb27, Psb28 and Psb34). The N-terminus of Psb34 (this protein) binds to CP47 (psbB) in close proximity to PsbH on the cytoplasmic face of PSII.</text>
</comment>
<comment type="subcellular location">
    <subcellularLocation>
        <location evidence="1">Cellular thylakoid membrane</location>
        <topology evidence="1">Single-pass membrane protein</topology>
    </subcellularLocation>
</comment>
<comment type="mass spectrometry"/>
<comment type="similarity">
    <text evidence="3">Belongs to the Psb34 family.</text>
</comment>